<feature type="chain" id="PRO_1000092775" description="Translation initiation factor IF-3">
    <location>
        <begin position="1"/>
        <end position="187"/>
    </location>
</feature>
<reference key="1">
    <citation type="journal article" date="2008" name="PLoS ONE">
        <title>Genome sequence of the saprophyte Leptospira biflexa provides insights into the evolution of Leptospira and the pathogenesis of leptospirosis.</title>
        <authorList>
            <person name="Picardeau M."/>
            <person name="Bulach D.M."/>
            <person name="Bouchier C."/>
            <person name="Zuerner R.L."/>
            <person name="Zidane N."/>
            <person name="Wilson P.J."/>
            <person name="Creno S."/>
            <person name="Kuczek E.S."/>
            <person name="Bommezzadri S."/>
            <person name="Davis J.C."/>
            <person name="McGrath A."/>
            <person name="Johnson M.J."/>
            <person name="Boursaux-Eude C."/>
            <person name="Seemann T."/>
            <person name="Rouy Z."/>
            <person name="Coppel R.L."/>
            <person name="Rood J.I."/>
            <person name="Lajus A."/>
            <person name="Davies J.K."/>
            <person name="Medigue C."/>
            <person name="Adler B."/>
        </authorList>
    </citation>
    <scope>NUCLEOTIDE SEQUENCE [LARGE SCALE GENOMIC DNA]</scope>
    <source>
        <strain>Patoc 1 / Ames</strain>
    </source>
</reference>
<name>IF3_LEPBA</name>
<dbReference type="EMBL" id="CP000777">
    <property type="protein sequence ID" value="ABZ94821.1"/>
    <property type="molecule type" value="Genomic_DNA"/>
</dbReference>
<dbReference type="RefSeq" id="WP_012389351.1">
    <property type="nucleotide sequence ID" value="NC_010842.1"/>
</dbReference>
<dbReference type="SMR" id="B0SCH4"/>
<dbReference type="KEGG" id="lbf:LBF_2331"/>
<dbReference type="HOGENOM" id="CLU_054919_3_2_12"/>
<dbReference type="GO" id="GO:0005829">
    <property type="term" value="C:cytosol"/>
    <property type="evidence" value="ECO:0007669"/>
    <property type="project" value="TreeGrafter"/>
</dbReference>
<dbReference type="GO" id="GO:0016020">
    <property type="term" value="C:membrane"/>
    <property type="evidence" value="ECO:0007669"/>
    <property type="project" value="TreeGrafter"/>
</dbReference>
<dbReference type="GO" id="GO:0043022">
    <property type="term" value="F:ribosome binding"/>
    <property type="evidence" value="ECO:0007669"/>
    <property type="project" value="TreeGrafter"/>
</dbReference>
<dbReference type="GO" id="GO:0003743">
    <property type="term" value="F:translation initiation factor activity"/>
    <property type="evidence" value="ECO:0007669"/>
    <property type="project" value="UniProtKB-UniRule"/>
</dbReference>
<dbReference type="GO" id="GO:0032790">
    <property type="term" value="P:ribosome disassembly"/>
    <property type="evidence" value="ECO:0007669"/>
    <property type="project" value="TreeGrafter"/>
</dbReference>
<dbReference type="FunFam" id="3.30.110.10:FF:000001">
    <property type="entry name" value="Translation initiation factor IF-3"/>
    <property type="match status" value="1"/>
</dbReference>
<dbReference type="Gene3D" id="3.30.110.10">
    <property type="entry name" value="Translation initiation factor 3 (IF-3), C-terminal domain"/>
    <property type="match status" value="1"/>
</dbReference>
<dbReference type="Gene3D" id="3.10.20.80">
    <property type="entry name" value="Translation initiation factor 3 (IF-3), N-terminal domain"/>
    <property type="match status" value="1"/>
</dbReference>
<dbReference type="HAMAP" id="MF_00080">
    <property type="entry name" value="IF_3"/>
    <property type="match status" value="1"/>
</dbReference>
<dbReference type="InterPro" id="IPR036788">
    <property type="entry name" value="T_IF-3_C_sf"/>
</dbReference>
<dbReference type="InterPro" id="IPR036787">
    <property type="entry name" value="T_IF-3_N_sf"/>
</dbReference>
<dbReference type="InterPro" id="IPR019813">
    <property type="entry name" value="Translation_initiation_fac3_CS"/>
</dbReference>
<dbReference type="InterPro" id="IPR001288">
    <property type="entry name" value="Translation_initiation_fac_3"/>
</dbReference>
<dbReference type="InterPro" id="IPR019815">
    <property type="entry name" value="Translation_initiation_fac_3_C"/>
</dbReference>
<dbReference type="InterPro" id="IPR019814">
    <property type="entry name" value="Translation_initiation_fac_3_N"/>
</dbReference>
<dbReference type="NCBIfam" id="TIGR00168">
    <property type="entry name" value="infC"/>
    <property type="match status" value="1"/>
</dbReference>
<dbReference type="PANTHER" id="PTHR10938">
    <property type="entry name" value="TRANSLATION INITIATION FACTOR IF-3"/>
    <property type="match status" value="1"/>
</dbReference>
<dbReference type="PANTHER" id="PTHR10938:SF0">
    <property type="entry name" value="TRANSLATION INITIATION FACTOR IF-3, MITOCHONDRIAL"/>
    <property type="match status" value="1"/>
</dbReference>
<dbReference type="Pfam" id="PF00707">
    <property type="entry name" value="IF3_C"/>
    <property type="match status" value="1"/>
</dbReference>
<dbReference type="Pfam" id="PF05198">
    <property type="entry name" value="IF3_N"/>
    <property type="match status" value="1"/>
</dbReference>
<dbReference type="SUPFAM" id="SSF55200">
    <property type="entry name" value="Translation initiation factor IF3, C-terminal domain"/>
    <property type="match status" value="1"/>
</dbReference>
<dbReference type="SUPFAM" id="SSF54364">
    <property type="entry name" value="Translation initiation factor IF3, N-terminal domain"/>
    <property type="match status" value="1"/>
</dbReference>
<dbReference type="PROSITE" id="PS00938">
    <property type="entry name" value="IF3"/>
    <property type="match status" value="1"/>
</dbReference>
<keyword id="KW-0963">Cytoplasm</keyword>
<keyword id="KW-0396">Initiation factor</keyword>
<keyword id="KW-0648">Protein biosynthesis</keyword>
<organism>
    <name type="scientific">Leptospira biflexa serovar Patoc (strain Patoc 1 / Ames)</name>
    <dbReference type="NCBI Taxonomy" id="355278"/>
    <lineage>
        <taxon>Bacteria</taxon>
        <taxon>Pseudomonadati</taxon>
        <taxon>Spirochaetota</taxon>
        <taxon>Spirochaetia</taxon>
        <taxon>Leptospirales</taxon>
        <taxon>Leptospiraceae</taxon>
        <taxon>Leptospira</taxon>
    </lineage>
</organism>
<proteinExistence type="inferred from homology"/>
<comment type="function">
    <text evidence="1">IF-3 binds to the 30S ribosomal subunit and shifts the equilibrium between 70S ribosomes and their 50S and 30S subunits in favor of the free subunits, thus enhancing the availability of 30S subunits on which protein synthesis initiation begins.</text>
</comment>
<comment type="subunit">
    <text evidence="1">Monomer.</text>
</comment>
<comment type="subcellular location">
    <subcellularLocation>
        <location evidence="1">Cytoplasm</location>
    </subcellularLocation>
</comment>
<comment type="similarity">
    <text evidence="1">Belongs to the IF-3 family.</text>
</comment>
<accession>B0SCH4</accession>
<protein>
    <recommendedName>
        <fullName evidence="1">Translation initiation factor IF-3</fullName>
    </recommendedName>
</protein>
<gene>
    <name evidence="1" type="primary">infC</name>
    <name type="ordered locus">LBF_2331</name>
</gene>
<evidence type="ECO:0000255" key="1">
    <source>
        <dbReference type="HAMAP-Rule" id="MF_00080"/>
    </source>
</evidence>
<sequence>MQKRPNPRGNPNQDKFAHIRINEQITNVASIRLVSDEGSDIVTLDEALRRAKEANLDLVEVSGDQDVHVCKLIDFGKYKFELLKKTKEAKKKQHVVTVKEIKIRPRIDNHDFEIKKRHALEFLQKGDKVKVTLRFRGREMVHSEIGMNIVNRFVEDLKEHASPEKMPVHDGKTIVVVMNPIGEKPKG</sequence>